<sequence>MLQQIYDFLNINYNVSRETFNKFKEYYSLLSKWNSTINLVSATTLQNFWQRHIFDSIQLLNYIHNKDIIVADLGSGAGFPGVVLSISGIKNVILIESDSRKAAFLLQAAQLSDQKIEIINDRIQNLKVKCDLVTVRALANLSTILSHTKQFTVKDKYLILKGKNYQHEITQALLHNKFNYTLYQSCTDDSSWILEIRI</sequence>
<feature type="chain" id="PRO_0000335388" description="Ribosomal RNA small subunit methyltransferase G">
    <location>
        <begin position="1"/>
        <end position="198"/>
    </location>
</feature>
<feature type="binding site" evidence="1">
    <location>
        <position position="74"/>
    </location>
    <ligand>
        <name>S-adenosyl-L-methionine</name>
        <dbReference type="ChEBI" id="CHEBI:59789"/>
    </ligand>
</feature>
<feature type="binding site" evidence="1">
    <location>
        <position position="79"/>
    </location>
    <ligand>
        <name>S-adenosyl-L-methionine</name>
        <dbReference type="ChEBI" id="CHEBI:59789"/>
    </ligand>
</feature>
<feature type="binding site" evidence="1">
    <location>
        <begin position="123"/>
        <end position="124"/>
    </location>
    <ligand>
        <name>S-adenosyl-L-methionine</name>
        <dbReference type="ChEBI" id="CHEBI:59789"/>
    </ligand>
</feature>
<feature type="binding site" evidence="1">
    <location>
        <position position="136"/>
    </location>
    <ligand>
        <name>S-adenosyl-L-methionine</name>
        <dbReference type="ChEBI" id="CHEBI:59789"/>
    </ligand>
</feature>
<protein>
    <recommendedName>
        <fullName evidence="1">Ribosomal RNA small subunit methyltransferase G</fullName>
        <ecNumber evidence="1">2.1.1.170</ecNumber>
    </recommendedName>
    <alternativeName>
        <fullName evidence="1">16S rRNA 7-methylguanosine methyltransferase</fullName>
        <shortName evidence="1">16S rRNA m7G methyltransferase</shortName>
    </alternativeName>
</protein>
<name>RSMG_ORITB</name>
<evidence type="ECO:0000255" key="1">
    <source>
        <dbReference type="HAMAP-Rule" id="MF_00074"/>
    </source>
</evidence>
<accession>A5CDU7</accession>
<dbReference type="EC" id="2.1.1.170" evidence="1"/>
<dbReference type="EMBL" id="AM494475">
    <property type="protein sequence ID" value="CAM80105.1"/>
    <property type="molecule type" value="Genomic_DNA"/>
</dbReference>
<dbReference type="RefSeq" id="WP_011944754.1">
    <property type="nucleotide sequence ID" value="NC_009488.1"/>
</dbReference>
<dbReference type="SMR" id="A5CDU7"/>
<dbReference type="KEGG" id="ots:OTBS_1039"/>
<dbReference type="eggNOG" id="COG0357">
    <property type="taxonomic scope" value="Bacteria"/>
</dbReference>
<dbReference type="HOGENOM" id="CLU_065341_1_1_5"/>
<dbReference type="Proteomes" id="UP000001565">
    <property type="component" value="Chromosome"/>
</dbReference>
<dbReference type="GO" id="GO:0005829">
    <property type="term" value="C:cytosol"/>
    <property type="evidence" value="ECO:0007669"/>
    <property type="project" value="TreeGrafter"/>
</dbReference>
<dbReference type="GO" id="GO:0070043">
    <property type="term" value="F:rRNA (guanine-N7-)-methyltransferase activity"/>
    <property type="evidence" value="ECO:0007669"/>
    <property type="project" value="UniProtKB-UniRule"/>
</dbReference>
<dbReference type="Gene3D" id="3.40.50.150">
    <property type="entry name" value="Vaccinia Virus protein VP39"/>
    <property type="match status" value="1"/>
</dbReference>
<dbReference type="HAMAP" id="MF_00074">
    <property type="entry name" value="16SrRNA_methyltr_G"/>
    <property type="match status" value="1"/>
</dbReference>
<dbReference type="InterPro" id="IPR003682">
    <property type="entry name" value="rRNA_ssu_MeTfrase_G"/>
</dbReference>
<dbReference type="InterPro" id="IPR029063">
    <property type="entry name" value="SAM-dependent_MTases_sf"/>
</dbReference>
<dbReference type="NCBIfam" id="TIGR00138">
    <property type="entry name" value="rsmG_gidB"/>
    <property type="match status" value="1"/>
</dbReference>
<dbReference type="PANTHER" id="PTHR31760">
    <property type="entry name" value="S-ADENOSYL-L-METHIONINE-DEPENDENT METHYLTRANSFERASES SUPERFAMILY PROTEIN"/>
    <property type="match status" value="1"/>
</dbReference>
<dbReference type="PANTHER" id="PTHR31760:SF0">
    <property type="entry name" value="S-ADENOSYL-L-METHIONINE-DEPENDENT METHYLTRANSFERASES SUPERFAMILY PROTEIN"/>
    <property type="match status" value="1"/>
</dbReference>
<dbReference type="Pfam" id="PF02527">
    <property type="entry name" value="GidB"/>
    <property type="match status" value="1"/>
</dbReference>
<dbReference type="PIRSF" id="PIRSF003078">
    <property type="entry name" value="GidB"/>
    <property type="match status" value="1"/>
</dbReference>
<dbReference type="SUPFAM" id="SSF53335">
    <property type="entry name" value="S-adenosyl-L-methionine-dependent methyltransferases"/>
    <property type="match status" value="1"/>
</dbReference>
<reference key="1">
    <citation type="journal article" date="2007" name="Proc. Natl. Acad. Sci. U.S.A.">
        <title>The Orientia tsutsugamushi genome reveals massive proliferation of conjugative type IV secretion system and host-cell interaction genes.</title>
        <authorList>
            <person name="Cho N.-H."/>
            <person name="Kim H.-R."/>
            <person name="Lee J.-H."/>
            <person name="Kim S.-Y."/>
            <person name="Kim J."/>
            <person name="Cha S."/>
            <person name="Kim S.-Y."/>
            <person name="Darby A.C."/>
            <person name="Fuxelius H.-H."/>
            <person name="Yin J."/>
            <person name="Kim J.H."/>
            <person name="Kim J."/>
            <person name="Lee S.J."/>
            <person name="Koh Y.-S."/>
            <person name="Jang W.-J."/>
            <person name="Park K.-H."/>
            <person name="Andersson S.G.E."/>
            <person name="Choi M.-S."/>
            <person name="Kim I.-S."/>
        </authorList>
    </citation>
    <scope>NUCLEOTIDE SEQUENCE [LARGE SCALE GENOMIC DNA]</scope>
    <source>
        <strain>Boryong</strain>
    </source>
</reference>
<keyword id="KW-0963">Cytoplasm</keyword>
<keyword id="KW-0489">Methyltransferase</keyword>
<keyword id="KW-1185">Reference proteome</keyword>
<keyword id="KW-0698">rRNA processing</keyword>
<keyword id="KW-0949">S-adenosyl-L-methionine</keyword>
<keyword id="KW-0808">Transferase</keyword>
<organism>
    <name type="scientific">Orientia tsutsugamushi (strain Boryong)</name>
    <name type="common">Rickettsia tsutsugamushi</name>
    <dbReference type="NCBI Taxonomy" id="357244"/>
    <lineage>
        <taxon>Bacteria</taxon>
        <taxon>Pseudomonadati</taxon>
        <taxon>Pseudomonadota</taxon>
        <taxon>Alphaproteobacteria</taxon>
        <taxon>Rickettsiales</taxon>
        <taxon>Rickettsiaceae</taxon>
        <taxon>Rickettsieae</taxon>
        <taxon>Orientia</taxon>
    </lineage>
</organism>
<gene>
    <name evidence="1" type="primary">rsmG</name>
    <name type="ordered locus">OTBS_1039</name>
</gene>
<proteinExistence type="inferred from homology"/>
<comment type="function">
    <text evidence="1">Specifically methylates the N7 position of guanine in position 527 of 16S rRNA.</text>
</comment>
<comment type="catalytic activity">
    <reaction evidence="1">
        <text>guanosine(527) in 16S rRNA + S-adenosyl-L-methionine = N(7)-methylguanosine(527) in 16S rRNA + S-adenosyl-L-homocysteine</text>
        <dbReference type="Rhea" id="RHEA:42732"/>
        <dbReference type="Rhea" id="RHEA-COMP:10209"/>
        <dbReference type="Rhea" id="RHEA-COMP:10210"/>
        <dbReference type="ChEBI" id="CHEBI:57856"/>
        <dbReference type="ChEBI" id="CHEBI:59789"/>
        <dbReference type="ChEBI" id="CHEBI:74269"/>
        <dbReference type="ChEBI" id="CHEBI:74480"/>
        <dbReference type="EC" id="2.1.1.170"/>
    </reaction>
</comment>
<comment type="subcellular location">
    <subcellularLocation>
        <location evidence="1">Cytoplasm</location>
    </subcellularLocation>
</comment>
<comment type="similarity">
    <text evidence="1">Belongs to the methyltransferase superfamily. RNA methyltransferase RsmG family.</text>
</comment>